<comment type="function">
    <text evidence="1">eIF-2 functions in the early steps of protein synthesis by forming a ternary complex with GTP and initiator tRNA.</text>
</comment>
<comment type="subunit">
    <text evidence="1">Heterotrimer composed of an alpha, a beta and a gamma chain.</text>
</comment>
<comment type="similarity">
    <text evidence="2">Belongs to the eIF-2-beta/eIF-5 family.</text>
</comment>
<feature type="chain" id="PRO_0000137436" description="Translation initiation factor 2 subunit beta">
    <location>
        <begin position="1"/>
        <end position="209"/>
    </location>
</feature>
<feature type="domain" description="TRAM">
    <location>
        <begin position="144"/>
        <end position="202"/>
    </location>
</feature>
<keyword id="KW-0396">Initiation factor</keyword>
<keyword id="KW-0648">Protein biosynthesis</keyword>
<keyword id="KW-1185">Reference proteome</keyword>
<proteinExistence type="inferred from homology"/>
<gene>
    <name type="primary">eif2b</name>
    <name type="ordered locus">Ta0605</name>
</gene>
<name>IF2B_THEAC</name>
<accession>Q9HKJ3</accession>
<organism>
    <name type="scientific">Thermoplasma acidophilum (strain ATCC 25905 / DSM 1728 / JCM 9062 / NBRC 15155 / AMRC-C165)</name>
    <dbReference type="NCBI Taxonomy" id="273075"/>
    <lineage>
        <taxon>Archaea</taxon>
        <taxon>Methanobacteriati</taxon>
        <taxon>Thermoplasmatota</taxon>
        <taxon>Thermoplasmata</taxon>
        <taxon>Thermoplasmatales</taxon>
        <taxon>Thermoplasmataceae</taxon>
        <taxon>Thermoplasma</taxon>
    </lineage>
</organism>
<protein>
    <recommendedName>
        <fullName>Translation initiation factor 2 subunit beta</fullName>
    </recommendedName>
    <alternativeName>
        <fullName>aIF2-beta</fullName>
    </alternativeName>
    <alternativeName>
        <fullName>eIF-2-beta</fullName>
    </alternativeName>
</protein>
<evidence type="ECO:0000250" key="1"/>
<evidence type="ECO:0000305" key="2"/>
<reference key="1">
    <citation type="journal article" date="2000" name="Nature">
        <title>The genome sequence of the thermoacidophilic scavenger Thermoplasma acidophilum.</title>
        <authorList>
            <person name="Ruepp A."/>
            <person name="Graml W."/>
            <person name="Santos-Martinez M.-L."/>
            <person name="Koretke K.K."/>
            <person name="Volker C."/>
            <person name="Mewes H.-W."/>
            <person name="Frishman D."/>
            <person name="Stocker S."/>
            <person name="Lupas A.N."/>
            <person name="Baumeister W."/>
        </authorList>
    </citation>
    <scope>NUCLEOTIDE SEQUENCE [LARGE SCALE GENOMIC DNA]</scope>
    <source>
        <strain>ATCC 25905 / DSM 1728 / JCM 9062 / NBRC 15155 / AMRC-C165</strain>
    </source>
</reference>
<sequence length="209" mass="23899">MTDDYEKLLEKAKNVLSSSTKNIDRLKIPDPEIIREGKATIIRNFQDIVDIINRDPEHIIKFLTREFGTNIVQNGRRLIINRKLTLEELLDKMNEYINTYVRCYECGSLDTEIQKSGRISLLVCKACGAQHPIHSVREAKDDETIEEGKEYVVEITEVGSSGEGRTNYKGYTIFVPGAKRGETVKVRIKKVKNDVAIGEIIERSKQEKK</sequence>
<dbReference type="EMBL" id="AL445064">
    <property type="protein sequence ID" value="CAC11744.1"/>
    <property type="molecule type" value="Genomic_DNA"/>
</dbReference>
<dbReference type="RefSeq" id="WP_010901029.1">
    <property type="nucleotide sequence ID" value="NC_002578.1"/>
</dbReference>
<dbReference type="SMR" id="Q9HKJ3"/>
<dbReference type="FunCoup" id="Q9HKJ3">
    <property type="interactions" value="130"/>
</dbReference>
<dbReference type="STRING" id="273075.gene:9571824"/>
<dbReference type="PaxDb" id="273075-Ta0605"/>
<dbReference type="EnsemblBacteria" id="CAC11744">
    <property type="protein sequence ID" value="CAC11744"/>
    <property type="gene ID" value="CAC11744"/>
</dbReference>
<dbReference type="KEGG" id="tac:Ta0605"/>
<dbReference type="eggNOG" id="arCOG01640">
    <property type="taxonomic scope" value="Archaea"/>
</dbReference>
<dbReference type="HOGENOM" id="CLU_026663_3_0_2"/>
<dbReference type="InParanoid" id="Q9HKJ3"/>
<dbReference type="OrthoDB" id="38099at2157"/>
<dbReference type="Proteomes" id="UP000001024">
    <property type="component" value="Chromosome"/>
</dbReference>
<dbReference type="GO" id="GO:0043565">
    <property type="term" value="F:sequence-specific DNA binding"/>
    <property type="evidence" value="ECO:0007669"/>
    <property type="project" value="InterPro"/>
</dbReference>
<dbReference type="GO" id="GO:0003743">
    <property type="term" value="F:translation initiation factor activity"/>
    <property type="evidence" value="ECO:0007669"/>
    <property type="project" value="UniProtKB-UniRule"/>
</dbReference>
<dbReference type="GO" id="GO:0006355">
    <property type="term" value="P:regulation of DNA-templated transcription"/>
    <property type="evidence" value="ECO:0007669"/>
    <property type="project" value="InterPro"/>
</dbReference>
<dbReference type="Gene3D" id="3.30.30.170">
    <property type="match status" value="1"/>
</dbReference>
<dbReference type="Gene3D" id="2.40.50.140">
    <property type="entry name" value="Nucleic acid-binding proteins"/>
    <property type="match status" value="1"/>
</dbReference>
<dbReference type="HAMAP" id="MF_00232">
    <property type="entry name" value="eIF_2_beta"/>
    <property type="match status" value="1"/>
</dbReference>
<dbReference type="InterPro" id="IPR045196">
    <property type="entry name" value="IF2/IF5"/>
</dbReference>
<dbReference type="InterPro" id="IPR012340">
    <property type="entry name" value="NA-bd_OB-fold"/>
</dbReference>
<dbReference type="InterPro" id="IPR004458">
    <property type="entry name" value="TIF2_bsu_arc"/>
</dbReference>
<dbReference type="InterPro" id="IPR002792">
    <property type="entry name" value="TRAM_dom"/>
</dbReference>
<dbReference type="InterPro" id="IPR002735">
    <property type="entry name" value="Transl_init_fac_IF2/IF5_dom"/>
</dbReference>
<dbReference type="InterPro" id="IPR016189">
    <property type="entry name" value="Transl_init_fac_IF2/IF5_N"/>
</dbReference>
<dbReference type="InterPro" id="IPR016190">
    <property type="entry name" value="Transl_init_fac_IF2/IF5_Zn-bd"/>
</dbReference>
<dbReference type="InterPro" id="IPR000679">
    <property type="entry name" value="Znf_GATA"/>
</dbReference>
<dbReference type="NCBIfam" id="NF003067">
    <property type="entry name" value="PRK03988.1"/>
    <property type="match status" value="1"/>
</dbReference>
<dbReference type="NCBIfam" id="NF008993">
    <property type="entry name" value="PRK12336.1"/>
    <property type="match status" value="1"/>
</dbReference>
<dbReference type="PANTHER" id="PTHR23001">
    <property type="entry name" value="EUKARYOTIC TRANSLATION INITIATION FACTOR"/>
    <property type="match status" value="1"/>
</dbReference>
<dbReference type="PANTHER" id="PTHR23001:SF3">
    <property type="entry name" value="EUKARYOTIC TRANSLATION INITIATION FACTOR 2 SUBUNIT 2"/>
    <property type="match status" value="1"/>
</dbReference>
<dbReference type="Pfam" id="PF01873">
    <property type="entry name" value="eIF-5_eIF-2B"/>
    <property type="match status" value="1"/>
</dbReference>
<dbReference type="Pfam" id="PF01938">
    <property type="entry name" value="TRAM"/>
    <property type="match status" value="1"/>
</dbReference>
<dbReference type="SMART" id="SM00653">
    <property type="entry name" value="eIF2B_5"/>
    <property type="match status" value="1"/>
</dbReference>
<dbReference type="SUPFAM" id="SSF50249">
    <property type="entry name" value="Nucleic acid-binding proteins"/>
    <property type="match status" value="1"/>
</dbReference>
<dbReference type="SUPFAM" id="SSF100966">
    <property type="entry name" value="Translation initiation factor 2 beta, aIF2beta, N-terminal domain"/>
    <property type="match status" value="1"/>
</dbReference>
<dbReference type="SUPFAM" id="SSF75689">
    <property type="entry name" value="Zinc-binding domain of translation initiation factor 2 beta"/>
    <property type="match status" value="1"/>
</dbReference>
<dbReference type="PROSITE" id="PS50926">
    <property type="entry name" value="TRAM"/>
    <property type="match status" value="1"/>
</dbReference>